<comment type="function">
    <text evidence="1">Catalyzes the sequential NAD-dependent oxidations of L-histidinol to L-histidinaldehyde and then to L-histidine.</text>
</comment>
<comment type="catalytic activity">
    <reaction evidence="1">
        <text>L-histidinol + 2 NAD(+) + H2O = L-histidine + 2 NADH + 3 H(+)</text>
        <dbReference type="Rhea" id="RHEA:20641"/>
        <dbReference type="ChEBI" id="CHEBI:15377"/>
        <dbReference type="ChEBI" id="CHEBI:15378"/>
        <dbReference type="ChEBI" id="CHEBI:57540"/>
        <dbReference type="ChEBI" id="CHEBI:57595"/>
        <dbReference type="ChEBI" id="CHEBI:57699"/>
        <dbReference type="ChEBI" id="CHEBI:57945"/>
        <dbReference type="EC" id="1.1.1.23"/>
    </reaction>
</comment>
<comment type="cofactor">
    <cofactor evidence="1">
        <name>Zn(2+)</name>
        <dbReference type="ChEBI" id="CHEBI:29105"/>
    </cofactor>
    <text evidence="1">Binds 1 zinc ion per subunit.</text>
</comment>
<comment type="pathway">
    <text evidence="1">Amino-acid biosynthesis; L-histidine biosynthesis; L-histidine from 5-phospho-alpha-D-ribose 1-diphosphate: step 9/9.</text>
</comment>
<comment type="similarity">
    <text evidence="1">Belongs to the histidinol dehydrogenase family.</text>
</comment>
<keyword id="KW-0028">Amino-acid biosynthesis</keyword>
<keyword id="KW-0368">Histidine biosynthesis</keyword>
<keyword id="KW-0479">Metal-binding</keyword>
<keyword id="KW-0520">NAD</keyword>
<keyword id="KW-0560">Oxidoreductase</keyword>
<keyword id="KW-1185">Reference proteome</keyword>
<keyword id="KW-0862">Zinc</keyword>
<dbReference type="EC" id="1.1.1.23" evidence="1"/>
<dbReference type="EMBL" id="AE010300">
    <property type="protein sequence ID" value="AAN49714.1"/>
    <property type="molecule type" value="Genomic_DNA"/>
</dbReference>
<dbReference type="RefSeq" id="NP_712696.1">
    <property type="nucleotide sequence ID" value="NC_004342.2"/>
</dbReference>
<dbReference type="RefSeq" id="WP_001007465.1">
    <property type="nucleotide sequence ID" value="NC_004342.2"/>
</dbReference>
<dbReference type="SMR" id="Q8F393"/>
<dbReference type="FunCoup" id="Q8F393">
    <property type="interactions" value="506"/>
</dbReference>
<dbReference type="STRING" id="189518.LA_2515"/>
<dbReference type="PaxDb" id="189518-LA_2515"/>
<dbReference type="EnsemblBacteria" id="AAN49714">
    <property type="protein sequence ID" value="AAN49714"/>
    <property type="gene ID" value="LA_2515"/>
</dbReference>
<dbReference type="KEGG" id="lil:LA_2515"/>
<dbReference type="PATRIC" id="fig|189518.3.peg.2497"/>
<dbReference type="HOGENOM" id="CLU_006732_3_0_12"/>
<dbReference type="InParanoid" id="Q8F393"/>
<dbReference type="OrthoDB" id="9805269at2"/>
<dbReference type="UniPathway" id="UPA00031">
    <property type="reaction ID" value="UER00014"/>
</dbReference>
<dbReference type="Proteomes" id="UP000001408">
    <property type="component" value="Chromosome I"/>
</dbReference>
<dbReference type="GO" id="GO:0005737">
    <property type="term" value="C:cytoplasm"/>
    <property type="evidence" value="ECO:0000318"/>
    <property type="project" value="GO_Central"/>
</dbReference>
<dbReference type="GO" id="GO:0005829">
    <property type="term" value="C:cytosol"/>
    <property type="evidence" value="ECO:0000318"/>
    <property type="project" value="GO_Central"/>
</dbReference>
<dbReference type="GO" id="GO:0004399">
    <property type="term" value="F:histidinol dehydrogenase activity"/>
    <property type="evidence" value="ECO:0000318"/>
    <property type="project" value="GO_Central"/>
</dbReference>
<dbReference type="GO" id="GO:0051287">
    <property type="term" value="F:NAD binding"/>
    <property type="evidence" value="ECO:0007669"/>
    <property type="project" value="InterPro"/>
</dbReference>
<dbReference type="GO" id="GO:0008270">
    <property type="term" value="F:zinc ion binding"/>
    <property type="evidence" value="ECO:0007669"/>
    <property type="project" value="UniProtKB-UniRule"/>
</dbReference>
<dbReference type="GO" id="GO:0000105">
    <property type="term" value="P:L-histidine biosynthetic process"/>
    <property type="evidence" value="ECO:0000318"/>
    <property type="project" value="GO_Central"/>
</dbReference>
<dbReference type="CDD" id="cd06572">
    <property type="entry name" value="Histidinol_dh"/>
    <property type="match status" value="1"/>
</dbReference>
<dbReference type="FunFam" id="3.40.50.1980:FF:000001">
    <property type="entry name" value="Histidinol dehydrogenase"/>
    <property type="match status" value="1"/>
</dbReference>
<dbReference type="Gene3D" id="1.20.5.1300">
    <property type="match status" value="1"/>
</dbReference>
<dbReference type="Gene3D" id="3.40.50.1980">
    <property type="entry name" value="Nitrogenase molybdenum iron protein domain"/>
    <property type="match status" value="2"/>
</dbReference>
<dbReference type="HAMAP" id="MF_01024">
    <property type="entry name" value="HisD"/>
    <property type="match status" value="1"/>
</dbReference>
<dbReference type="InterPro" id="IPR016161">
    <property type="entry name" value="Ald_DH/histidinol_DH"/>
</dbReference>
<dbReference type="InterPro" id="IPR001692">
    <property type="entry name" value="Histidinol_DH_CS"/>
</dbReference>
<dbReference type="InterPro" id="IPR022695">
    <property type="entry name" value="Histidinol_DH_monofunct"/>
</dbReference>
<dbReference type="InterPro" id="IPR012131">
    <property type="entry name" value="Hstdl_DH"/>
</dbReference>
<dbReference type="NCBIfam" id="TIGR00069">
    <property type="entry name" value="hisD"/>
    <property type="match status" value="1"/>
</dbReference>
<dbReference type="PANTHER" id="PTHR21256:SF2">
    <property type="entry name" value="HISTIDINE BIOSYNTHESIS TRIFUNCTIONAL PROTEIN"/>
    <property type="match status" value="1"/>
</dbReference>
<dbReference type="PANTHER" id="PTHR21256">
    <property type="entry name" value="HISTIDINOL DEHYDROGENASE HDH"/>
    <property type="match status" value="1"/>
</dbReference>
<dbReference type="Pfam" id="PF00815">
    <property type="entry name" value="Histidinol_dh"/>
    <property type="match status" value="1"/>
</dbReference>
<dbReference type="PIRSF" id="PIRSF000099">
    <property type="entry name" value="Histidinol_dh"/>
    <property type="match status" value="1"/>
</dbReference>
<dbReference type="PRINTS" id="PR00083">
    <property type="entry name" value="HOLDHDRGNASE"/>
</dbReference>
<dbReference type="SUPFAM" id="SSF53720">
    <property type="entry name" value="ALDH-like"/>
    <property type="match status" value="1"/>
</dbReference>
<dbReference type="PROSITE" id="PS00611">
    <property type="entry name" value="HISOL_DEHYDROGENASE"/>
    <property type="match status" value="1"/>
</dbReference>
<sequence length="427" mass="46380">MAIQIFKVGLKDHSVLDPVLKRAREDLSSTLALVKPIVEDVKNRGDSALREYTQKFDEVIPPKSFVLEISKLNPKIDPKLKTALVKAAKNIRNFHKIQIPENKEIIIHGNKLGILHTPIESVSVYAPGGKALYPSTILMGVIPAKLAGVKNIQIVTPPRKGTLPDGLIAAAKIAGADRIVMAGGAQGIAAVSYGTESIPSSEFVVGPGNKFVTAAKVYLSGQGVIGIDSPAGPSEVLIIADDSADPMWVAADLLSQAEHGEDSVAILCTNSLSLAQKVKEEVEKALIERPKRGEMKRKSIKDHGKIFVFSNLEECFVFSNLFAPEHLEIQTKNFKKDLKKVKHAGSVFLGNYSPVAMGDYISGTNHILPTAGAARIYSSLGVSTFLKRVTWQEVSKKSIQNLYPHVKVLSEFEGLDEEHGNSVRIRR</sequence>
<gene>
    <name evidence="1" type="primary">hisD</name>
    <name type="ordered locus">LA_2515</name>
</gene>
<proteinExistence type="inferred from homology"/>
<reference key="1">
    <citation type="journal article" date="2003" name="Nature">
        <title>Unique physiological and pathogenic features of Leptospira interrogans revealed by whole-genome sequencing.</title>
        <authorList>
            <person name="Ren S.-X."/>
            <person name="Fu G."/>
            <person name="Jiang X.-G."/>
            <person name="Zeng R."/>
            <person name="Miao Y.-G."/>
            <person name="Xu H."/>
            <person name="Zhang Y.-X."/>
            <person name="Xiong H."/>
            <person name="Lu G."/>
            <person name="Lu L.-F."/>
            <person name="Jiang H.-Q."/>
            <person name="Jia J."/>
            <person name="Tu Y.-F."/>
            <person name="Jiang J.-X."/>
            <person name="Gu W.-Y."/>
            <person name="Zhang Y.-Q."/>
            <person name="Cai Z."/>
            <person name="Sheng H.-H."/>
            <person name="Yin H.-F."/>
            <person name="Zhang Y."/>
            <person name="Zhu G.-F."/>
            <person name="Wan M."/>
            <person name="Huang H.-L."/>
            <person name="Qian Z."/>
            <person name="Wang S.-Y."/>
            <person name="Ma W."/>
            <person name="Yao Z.-J."/>
            <person name="Shen Y."/>
            <person name="Qiang B.-Q."/>
            <person name="Xia Q.-C."/>
            <person name="Guo X.-K."/>
            <person name="Danchin A."/>
            <person name="Saint Girons I."/>
            <person name="Somerville R.L."/>
            <person name="Wen Y.-M."/>
            <person name="Shi M.-H."/>
            <person name="Chen Z."/>
            <person name="Xu J.-G."/>
            <person name="Zhao G.-P."/>
        </authorList>
    </citation>
    <scope>NUCLEOTIDE SEQUENCE [LARGE SCALE GENOMIC DNA]</scope>
    <source>
        <strain>56601</strain>
    </source>
</reference>
<evidence type="ECO:0000255" key="1">
    <source>
        <dbReference type="HAMAP-Rule" id="MF_01024"/>
    </source>
</evidence>
<feature type="chain" id="PRO_0000135788" description="Histidinol dehydrogenase">
    <location>
        <begin position="1"/>
        <end position="427"/>
    </location>
</feature>
<feature type="active site" description="Proton acceptor" evidence="1">
    <location>
        <position position="325"/>
    </location>
</feature>
<feature type="active site" description="Proton acceptor" evidence="1">
    <location>
        <position position="326"/>
    </location>
</feature>
<feature type="binding site" evidence="1">
    <location>
        <position position="125"/>
    </location>
    <ligand>
        <name>NAD(+)</name>
        <dbReference type="ChEBI" id="CHEBI:57540"/>
    </ligand>
</feature>
<feature type="binding site" evidence="1">
    <location>
        <position position="186"/>
    </location>
    <ligand>
        <name>NAD(+)</name>
        <dbReference type="ChEBI" id="CHEBI:57540"/>
    </ligand>
</feature>
<feature type="binding site" evidence="1">
    <location>
        <position position="209"/>
    </location>
    <ligand>
        <name>NAD(+)</name>
        <dbReference type="ChEBI" id="CHEBI:57540"/>
    </ligand>
</feature>
<feature type="binding site" evidence="1">
    <location>
        <position position="234"/>
    </location>
    <ligand>
        <name>substrate</name>
    </ligand>
</feature>
<feature type="binding site" evidence="1">
    <location>
        <position position="256"/>
    </location>
    <ligand>
        <name>substrate</name>
    </ligand>
</feature>
<feature type="binding site" evidence="1">
    <location>
        <position position="256"/>
    </location>
    <ligand>
        <name>Zn(2+)</name>
        <dbReference type="ChEBI" id="CHEBI:29105"/>
    </ligand>
</feature>
<feature type="binding site" evidence="1">
    <location>
        <position position="259"/>
    </location>
    <ligand>
        <name>substrate</name>
    </ligand>
</feature>
<feature type="binding site" evidence="1">
    <location>
        <position position="259"/>
    </location>
    <ligand>
        <name>Zn(2+)</name>
        <dbReference type="ChEBI" id="CHEBI:29105"/>
    </ligand>
</feature>
<feature type="binding site" evidence="1">
    <location>
        <position position="326"/>
    </location>
    <ligand>
        <name>substrate</name>
    </ligand>
</feature>
<feature type="binding site" evidence="1">
    <location>
        <position position="359"/>
    </location>
    <ligand>
        <name>substrate</name>
    </ligand>
</feature>
<feature type="binding site" evidence="1">
    <location>
        <position position="359"/>
    </location>
    <ligand>
        <name>Zn(2+)</name>
        <dbReference type="ChEBI" id="CHEBI:29105"/>
    </ligand>
</feature>
<feature type="binding site" evidence="1">
    <location>
        <position position="413"/>
    </location>
    <ligand>
        <name>substrate</name>
    </ligand>
</feature>
<feature type="binding site" evidence="1">
    <location>
        <position position="419"/>
    </location>
    <ligand>
        <name>substrate</name>
    </ligand>
</feature>
<feature type="binding site" evidence="1">
    <location>
        <position position="419"/>
    </location>
    <ligand>
        <name>Zn(2+)</name>
        <dbReference type="ChEBI" id="CHEBI:29105"/>
    </ligand>
</feature>
<name>HISX_LEPIN</name>
<protein>
    <recommendedName>
        <fullName evidence="1">Histidinol dehydrogenase</fullName>
        <shortName evidence="1">HDH</shortName>
        <ecNumber evidence="1">1.1.1.23</ecNumber>
    </recommendedName>
</protein>
<accession>Q8F393</accession>
<organism>
    <name type="scientific">Leptospira interrogans serogroup Icterohaemorrhagiae serovar Lai (strain 56601)</name>
    <dbReference type="NCBI Taxonomy" id="189518"/>
    <lineage>
        <taxon>Bacteria</taxon>
        <taxon>Pseudomonadati</taxon>
        <taxon>Spirochaetota</taxon>
        <taxon>Spirochaetia</taxon>
        <taxon>Leptospirales</taxon>
        <taxon>Leptospiraceae</taxon>
        <taxon>Leptospira</taxon>
    </lineage>
</organism>